<evidence type="ECO:0000255" key="1">
    <source>
        <dbReference type="HAMAP-Rule" id="MF_01820"/>
    </source>
</evidence>
<evidence type="ECO:0000255" key="2">
    <source>
        <dbReference type="PROSITE-ProRule" id="PRU01058"/>
    </source>
</evidence>
<evidence type="ECO:0000256" key="3">
    <source>
        <dbReference type="SAM" id="MobiDB-lite"/>
    </source>
</evidence>
<comment type="function">
    <text evidence="1">One of several proteins that assist in the late maturation steps of the functional core of the 30S ribosomal subunit. Helps release RbfA from mature subunits. May play a role in the assembly of ribosomal proteins into the subunit. Circularly permuted GTPase that catalyzes slow GTP hydrolysis, GTPase activity is stimulated by the 30S ribosomal subunit.</text>
</comment>
<comment type="cofactor">
    <cofactor evidence="1">
        <name>Zn(2+)</name>
        <dbReference type="ChEBI" id="CHEBI:29105"/>
    </cofactor>
    <text evidence="1">Binds 1 zinc ion per subunit.</text>
</comment>
<comment type="subunit">
    <text evidence="1">Monomer. Associates with 30S ribosomal subunit, binds 16S rRNA.</text>
</comment>
<comment type="subcellular location">
    <subcellularLocation>
        <location evidence="1">Cytoplasm</location>
    </subcellularLocation>
</comment>
<comment type="similarity">
    <text evidence="1">Belongs to the TRAFAC class YlqF/YawG GTPase family. RsgA subfamily.</text>
</comment>
<keyword id="KW-0963">Cytoplasm</keyword>
<keyword id="KW-0342">GTP-binding</keyword>
<keyword id="KW-0378">Hydrolase</keyword>
<keyword id="KW-0479">Metal-binding</keyword>
<keyword id="KW-0547">Nucleotide-binding</keyword>
<keyword id="KW-1185">Reference proteome</keyword>
<keyword id="KW-0690">Ribosome biogenesis</keyword>
<keyword id="KW-0694">RNA-binding</keyword>
<keyword id="KW-0699">rRNA-binding</keyword>
<keyword id="KW-0862">Zinc</keyword>
<gene>
    <name evidence="1" type="primary">rsgA</name>
    <name type="ordered locus">LA_3997</name>
</gene>
<name>RSGA_LEPIN</name>
<sequence>MSQPNSILMSYGWDPSIYLEEPKLLEGLKPGRVLAVYGEYSKIIIEQGEKKGIFSGALMASGESIVTGDWVLIREIEGDELCIVEKILPRKTFLRRSNPGKRKGSQAIASNIDLLLVIMGLDNDYSPRRIERYLFLAKVSGAQVTIVLNKKDLCMDPENKFMEIKTIAGETPIEMISALDLKQTRTILQWIDPGKTITFLGSSGAGKSTIINSLLGGEIQKTNEVKVSDGTGKHTTTRRELFLLPSGGVLMDNPGIREVGLFSEGSEDELEEVFPEIAVAAEECRFNDCSHNEEPNCGVVAAVKDGRISEARYFSYLKLSKELMAYQALNDPEEARKKKQKDKQMSKALQKRLKDKGRK</sequence>
<reference key="1">
    <citation type="journal article" date="2003" name="Nature">
        <title>Unique physiological and pathogenic features of Leptospira interrogans revealed by whole-genome sequencing.</title>
        <authorList>
            <person name="Ren S.-X."/>
            <person name="Fu G."/>
            <person name="Jiang X.-G."/>
            <person name="Zeng R."/>
            <person name="Miao Y.-G."/>
            <person name="Xu H."/>
            <person name="Zhang Y.-X."/>
            <person name="Xiong H."/>
            <person name="Lu G."/>
            <person name="Lu L.-F."/>
            <person name="Jiang H.-Q."/>
            <person name="Jia J."/>
            <person name="Tu Y.-F."/>
            <person name="Jiang J.-X."/>
            <person name="Gu W.-Y."/>
            <person name="Zhang Y.-Q."/>
            <person name="Cai Z."/>
            <person name="Sheng H.-H."/>
            <person name="Yin H.-F."/>
            <person name="Zhang Y."/>
            <person name="Zhu G.-F."/>
            <person name="Wan M."/>
            <person name="Huang H.-L."/>
            <person name="Qian Z."/>
            <person name="Wang S.-Y."/>
            <person name="Ma W."/>
            <person name="Yao Z.-J."/>
            <person name="Shen Y."/>
            <person name="Qiang B.-Q."/>
            <person name="Xia Q.-C."/>
            <person name="Guo X.-K."/>
            <person name="Danchin A."/>
            <person name="Saint Girons I."/>
            <person name="Somerville R.L."/>
            <person name="Wen Y.-M."/>
            <person name="Shi M.-H."/>
            <person name="Chen Z."/>
            <person name="Xu J.-G."/>
            <person name="Zhao G.-P."/>
        </authorList>
    </citation>
    <scope>NUCLEOTIDE SEQUENCE [LARGE SCALE GENOMIC DNA]</scope>
    <source>
        <strain>56601</strain>
    </source>
</reference>
<protein>
    <recommendedName>
        <fullName evidence="1">Small ribosomal subunit biogenesis GTPase RsgA</fullName>
        <ecNumber evidence="1">3.6.1.-</ecNumber>
    </recommendedName>
</protein>
<dbReference type="EC" id="3.6.1.-" evidence="1"/>
<dbReference type="EMBL" id="AE010300">
    <property type="protein sequence ID" value="AAN51195.1"/>
    <property type="molecule type" value="Genomic_DNA"/>
</dbReference>
<dbReference type="RefSeq" id="NP_714177.1">
    <property type="nucleotide sequence ID" value="NC_004342.2"/>
</dbReference>
<dbReference type="RefSeq" id="WP_000082166.1">
    <property type="nucleotide sequence ID" value="NC_004342.2"/>
</dbReference>
<dbReference type="SMR" id="Q8EZ61"/>
<dbReference type="STRING" id="189518.LA_3997"/>
<dbReference type="PaxDb" id="189518-LA_3997"/>
<dbReference type="EnsemblBacteria" id="AAN51195">
    <property type="protein sequence ID" value="AAN51195"/>
    <property type="gene ID" value="LA_3997"/>
</dbReference>
<dbReference type="KEGG" id="lil:LA_3997"/>
<dbReference type="PATRIC" id="fig|189518.3.peg.3965"/>
<dbReference type="HOGENOM" id="CLU_033617_0_1_12"/>
<dbReference type="InParanoid" id="Q8EZ61"/>
<dbReference type="OrthoDB" id="9809485at2"/>
<dbReference type="Proteomes" id="UP000001408">
    <property type="component" value="Chromosome I"/>
</dbReference>
<dbReference type="GO" id="GO:0005737">
    <property type="term" value="C:cytoplasm"/>
    <property type="evidence" value="ECO:0007669"/>
    <property type="project" value="UniProtKB-SubCell"/>
</dbReference>
<dbReference type="GO" id="GO:0005525">
    <property type="term" value="F:GTP binding"/>
    <property type="evidence" value="ECO:0007669"/>
    <property type="project" value="UniProtKB-UniRule"/>
</dbReference>
<dbReference type="GO" id="GO:0003924">
    <property type="term" value="F:GTPase activity"/>
    <property type="evidence" value="ECO:0007669"/>
    <property type="project" value="UniProtKB-UniRule"/>
</dbReference>
<dbReference type="GO" id="GO:0046872">
    <property type="term" value="F:metal ion binding"/>
    <property type="evidence" value="ECO:0007669"/>
    <property type="project" value="UniProtKB-KW"/>
</dbReference>
<dbReference type="GO" id="GO:0019843">
    <property type="term" value="F:rRNA binding"/>
    <property type="evidence" value="ECO:0007669"/>
    <property type="project" value="UniProtKB-KW"/>
</dbReference>
<dbReference type="GO" id="GO:0042274">
    <property type="term" value="P:ribosomal small subunit biogenesis"/>
    <property type="evidence" value="ECO:0007669"/>
    <property type="project" value="UniProtKB-UniRule"/>
</dbReference>
<dbReference type="CDD" id="cd01854">
    <property type="entry name" value="YjeQ_EngC"/>
    <property type="match status" value="1"/>
</dbReference>
<dbReference type="Gene3D" id="3.40.50.300">
    <property type="entry name" value="P-loop containing nucleotide triphosphate hydrolases"/>
    <property type="match status" value="1"/>
</dbReference>
<dbReference type="Gene3D" id="1.10.40.50">
    <property type="entry name" value="Probable gtpase engc, domain 3"/>
    <property type="match status" value="1"/>
</dbReference>
<dbReference type="HAMAP" id="MF_01820">
    <property type="entry name" value="GTPase_RsgA"/>
    <property type="match status" value="1"/>
</dbReference>
<dbReference type="InterPro" id="IPR030378">
    <property type="entry name" value="G_CP_dom"/>
</dbReference>
<dbReference type="InterPro" id="IPR027417">
    <property type="entry name" value="P-loop_NTPase"/>
</dbReference>
<dbReference type="InterPro" id="IPR004881">
    <property type="entry name" value="Ribosome_biogen_GTPase_RsgA"/>
</dbReference>
<dbReference type="InterPro" id="IPR010914">
    <property type="entry name" value="RsgA_GTPase_dom"/>
</dbReference>
<dbReference type="NCBIfam" id="TIGR00157">
    <property type="entry name" value="ribosome small subunit-dependent GTPase A"/>
    <property type="match status" value="1"/>
</dbReference>
<dbReference type="PANTHER" id="PTHR32120">
    <property type="entry name" value="SMALL RIBOSOMAL SUBUNIT BIOGENESIS GTPASE RSGA"/>
    <property type="match status" value="1"/>
</dbReference>
<dbReference type="PANTHER" id="PTHR32120:SF10">
    <property type="entry name" value="SMALL RIBOSOMAL SUBUNIT BIOGENESIS GTPASE RSGA"/>
    <property type="match status" value="1"/>
</dbReference>
<dbReference type="Pfam" id="PF03193">
    <property type="entry name" value="RsgA_GTPase"/>
    <property type="match status" value="1"/>
</dbReference>
<dbReference type="SUPFAM" id="SSF52540">
    <property type="entry name" value="P-loop containing nucleoside triphosphate hydrolases"/>
    <property type="match status" value="1"/>
</dbReference>
<dbReference type="PROSITE" id="PS50936">
    <property type="entry name" value="ENGC_GTPASE"/>
    <property type="match status" value="1"/>
</dbReference>
<dbReference type="PROSITE" id="PS51721">
    <property type="entry name" value="G_CP"/>
    <property type="match status" value="1"/>
</dbReference>
<proteinExistence type="inferred from homology"/>
<accession>Q8EZ61</accession>
<organism>
    <name type="scientific">Leptospira interrogans serogroup Icterohaemorrhagiae serovar Lai (strain 56601)</name>
    <dbReference type="NCBI Taxonomy" id="189518"/>
    <lineage>
        <taxon>Bacteria</taxon>
        <taxon>Pseudomonadati</taxon>
        <taxon>Spirochaetota</taxon>
        <taxon>Spirochaetia</taxon>
        <taxon>Leptospirales</taxon>
        <taxon>Leptospiraceae</taxon>
        <taxon>Leptospira</taxon>
    </lineage>
</organism>
<feature type="chain" id="PRO_0000171486" description="Small ribosomal subunit biogenesis GTPase RsgA">
    <location>
        <begin position="1"/>
        <end position="359"/>
    </location>
</feature>
<feature type="domain" description="CP-type G" evidence="2">
    <location>
        <begin position="101"/>
        <end position="259"/>
    </location>
</feature>
<feature type="region of interest" description="Disordered" evidence="3">
    <location>
        <begin position="331"/>
        <end position="359"/>
    </location>
</feature>
<feature type="compositionally biased region" description="Basic residues" evidence="3">
    <location>
        <begin position="349"/>
        <end position="359"/>
    </location>
</feature>
<feature type="binding site" evidence="1">
    <location>
        <begin position="149"/>
        <end position="152"/>
    </location>
    <ligand>
        <name>GTP</name>
        <dbReference type="ChEBI" id="CHEBI:37565"/>
    </ligand>
</feature>
<feature type="binding site" evidence="1">
    <location>
        <begin position="201"/>
        <end position="209"/>
    </location>
    <ligand>
        <name>GTP</name>
        <dbReference type="ChEBI" id="CHEBI:37565"/>
    </ligand>
</feature>
<feature type="binding site" evidence="1">
    <location>
        <position position="284"/>
    </location>
    <ligand>
        <name>Zn(2+)</name>
        <dbReference type="ChEBI" id="CHEBI:29105"/>
    </ligand>
</feature>
<feature type="binding site" evidence="1">
    <location>
        <position position="289"/>
    </location>
    <ligand>
        <name>Zn(2+)</name>
        <dbReference type="ChEBI" id="CHEBI:29105"/>
    </ligand>
</feature>
<feature type="binding site" evidence="1">
    <location>
        <position position="291"/>
    </location>
    <ligand>
        <name>Zn(2+)</name>
        <dbReference type="ChEBI" id="CHEBI:29105"/>
    </ligand>
</feature>
<feature type="binding site" evidence="1">
    <location>
        <position position="297"/>
    </location>
    <ligand>
        <name>Zn(2+)</name>
        <dbReference type="ChEBI" id="CHEBI:29105"/>
    </ligand>
</feature>